<comment type="similarity">
    <text evidence="1">Belongs to the UPF0597 family.</text>
</comment>
<gene>
    <name type="ordered locus">Swoo_4889</name>
</gene>
<proteinExistence type="inferred from homology"/>
<evidence type="ECO:0000255" key="1">
    <source>
        <dbReference type="HAMAP-Rule" id="MF_01845"/>
    </source>
</evidence>
<dbReference type="EMBL" id="CP000961">
    <property type="protein sequence ID" value="ACA89138.1"/>
    <property type="molecule type" value="Genomic_DNA"/>
</dbReference>
<dbReference type="RefSeq" id="WP_012327455.1">
    <property type="nucleotide sequence ID" value="NC_010506.1"/>
</dbReference>
<dbReference type="SMR" id="B1KQ25"/>
<dbReference type="STRING" id="392500.Swoo_4889"/>
<dbReference type="KEGG" id="swd:Swoo_4889"/>
<dbReference type="eggNOG" id="COG3681">
    <property type="taxonomic scope" value="Bacteria"/>
</dbReference>
<dbReference type="HOGENOM" id="CLU_051840_0_0_6"/>
<dbReference type="Proteomes" id="UP000002168">
    <property type="component" value="Chromosome"/>
</dbReference>
<dbReference type="GO" id="GO:0080146">
    <property type="term" value="F:L-cysteine desulfhydrase activity"/>
    <property type="evidence" value="ECO:0007669"/>
    <property type="project" value="TreeGrafter"/>
</dbReference>
<dbReference type="GO" id="GO:0019450">
    <property type="term" value="P:L-cysteine catabolic process to pyruvate"/>
    <property type="evidence" value="ECO:0007669"/>
    <property type="project" value="TreeGrafter"/>
</dbReference>
<dbReference type="HAMAP" id="MF_01845">
    <property type="entry name" value="UPF0597"/>
    <property type="match status" value="1"/>
</dbReference>
<dbReference type="InterPro" id="IPR005130">
    <property type="entry name" value="Ser_deHydtase-like_asu"/>
</dbReference>
<dbReference type="InterPro" id="IPR021144">
    <property type="entry name" value="UPF0597"/>
</dbReference>
<dbReference type="PANTHER" id="PTHR30501">
    <property type="entry name" value="UPF0597 PROTEIN YHAM"/>
    <property type="match status" value="1"/>
</dbReference>
<dbReference type="PANTHER" id="PTHR30501:SF2">
    <property type="entry name" value="UPF0597 PROTEIN YHAM"/>
    <property type="match status" value="1"/>
</dbReference>
<dbReference type="Pfam" id="PF03313">
    <property type="entry name" value="SDH_alpha"/>
    <property type="match status" value="1"/>
</dbReference>
<dbReference type="PIRSF" id="PIRSF006054">
    <property type="entry name" value="UCP006054"/>
    <property type="match status" value="1"/>
</dbReference>
<sequence>MKPVWQKYIEIINQVVKPALGCTEPIAAAYGAAVAVQELGCSVPDSLEVFVSDNLYKNSMGVFVPGTGKIGLAIAAASGAIGGNADAGLEVLAAITPEQVLQAQEMIDAGKVSVKRTVTDEFIYCCVIAKFEGRESLVKICGGHTLIVEKQLNGKINFIADESSATSTGSICEGVDINIASIYEFATQVELEKIAFILQAADLNTKLSDEGMTNSYGLEVGRTMKKSIDEGILSNDLLNKIVMETAAASDARMGGATLPAMSNLGSGNQGIAATIPVVIAAKHYKNSDEQLARALILSHLGAIYIKSHYPPLSAFCGNTVTSAAAAMAMVYLAGGSFEQSCFAIQNVISDSSGMVCDGAKASCAMKVSTSSCAAVRAFLMAMNSRSVSGQGIIAKDVEQTIINIGQMISHGMPSTDTTIINIMSA</sequence>
<accession>B1KQ25</accession>
<keyword id="KW-1185">Reference proteome</keyword>
<feature type="chain" id="PRO_0000339856" description="UPF0597 protein Swoo_4889">
    <location>
        <begin position="1"/>
        <end position="425"/>
    </location>
</feature>
<protein>
    <recommendedName>
        <fullName evidence="1">UPF0597 protein Swoo_4889</fullName>
    </recommendedName>
</protein>
<reference key="1">
    <citation type="submission" date="2008-02" db="EMBL/GenBank/DDBJ databases">
        <title>Complete sequence of Shewanella woodyi ATCC 51908.</title>
        <authorList>
            <consortium name="US DOE Joint Genome Institute"/>
            <person name="Copeland A."/>
            <person name="Lucas S."/>
            <person name="Lapidus A."/>
            <person name="Glavina del Rio T."/>
            <person name="Dalin E."/>
            <person name="Tice H."/>
            <person name="Bruce D."/>
            <person name="Goodwin L."/>
            <person name="Pitluck S."/>
            <person name="Sims D."/>
            <person name="Brettin T."/>
            <person name="Detter J.C."/>
            <person name="Han C."/>
            <person name="Kuske C.R."/>
            <person name="Schmutz J."/>
            <person name="Larimer F."/>
            <person name="Land M."/>
            <person name="Hauser L."/>
            <person name="Kyrpides N."/>
            <person name="Lykidis A."/>
            <person name="Zhao J.-S."/>
            <person name="Richardson P."/>
        </authorList>
    </citation>
    <scope>NUCLEOTIDE SEQUENCE [LARGE SCALE GENOMIC DNA]</scope>
    <source>
        <strain>ATCC 51908 / MS32</strain>
    </source>
</reference>
<name>Y4889_SHEWM</name>
<organism>
    <name type="scientific">Shewanella woodyi (strain ATCC 51908 / MS32)</name>
    <dbReference type="NCBI Taxonomy" id="392500"/>
    <lineage>
        <taxon>Bacteria</taxon>
        <taxon>Pseudomonadati</taxon>
        <taxon>Pseudomonadota</taxon>
        <taxon>Gammaproteobacteria</taxon>
        <taxon>Alteromonadales</taxon>
        <taxon>Shewanellaceae</taxon>
        <taxon>Shewanella</taxon>
    </lineage>
</organism>